<gene>
    <name type="primary">SPRYD3</name>
</gene>
<name>SPRY3_PONAB</name>
<organism>
    <name type="scientific">Pongo abelii</name>
    <name type="common">Sumatran orangutan</name>
    <name type="synonym">Pongo pygmaeus abelii</name>
    <dbReference type="NCBI Taxonomy" id="9601"/>
    <lineage>
        <taxon>Eukaryota</taxon>
        <taxon>Metazoa</taxon>
        <taxon>Chordata</taxon>
        <taxon>Craniata</taxon>
        <taxon>Vertebrata</taxon>
        <taxon>Euteleostomi</taxon>
        <taxon>Mammalia</taxon>
        <taxon>Eutheria</taxon>
        <taxon>Euarchontoglires</taxon>
        <taxon>Primates</taxon>
        <taxon>Haplorrhini</taxon>
        <taxon>Catarrhini</taxon>
        <taxon>Hominidae</taxon>
        <taxon>Pongo</taxon>
    </lineage>
</organism>
<evidence type="ECO:0000255" key="1">
    <source>
        <dbReference type="PROSITE-ProRule" id="PRU00548"/>
    </source>
</evidence>
<evidence type="ECO:0000256" key="2">
    <source>
        <dbReference type="SAM" id="MobiDB-lite"/>
    </source>
</evidence>
<reference key="1">
    <citation type="submission" date="2004-11" db="EMBL/GenBank/DDBJ databases">
        <authorList>
            <consortium name="The German cDNA consortium"/>
        </authorList>
    </citation>
    <scope>NUCLEOTIDE SEQUENCE [LARGE SCALE MRNA]</scope>
    <source>
        <tissue>Brain cortex</tissue>
    </source>
</reference>
<dbReference type="EMBL" id="CR858569">
    <property type="protein sequence ID" value="CAH90794.1"/>
    <property type="molecule type" value="mRNA"/>
</dbReference>
<dbReference type="RefSeq" id="NP_001125451.1">
    <property type="nucleotide sequence ID" value="NM_001131979.1"/>
</dbReference>
<dbReference type="SMR" id="Q5RBR6"/>
<dbReference type="STRING" id="9601.ENSPPYP00000005208"/>
<dbReference type="GeneID" id="100433323"/>
<dbReference type="KEGG" id="pon:100433323"/>
<dbReference type="CTD" id="84926"/>
<dbReference type="eggNOG" id="KOG1477">
    <property type="taxonomic scope" value="Eukaryota"/>
</dbReference>
<dbReference type="InParanoid" id="Q5RBR6"/>
<dbReference type="OrthoDB" id="25503at2759"/>
<dbReference type="Proteomes" id="UP000001595">
    <property type="component" value="Unplaced"/>
</dbReference>
<dbReference type="CDD" id="cd12908">
    <property type="entry name" value="SPRYD3"/>
    <property type="match status" value="2"/>
</dbReference>
<dbReference type="Gene3D" id="2.60.120.920">
    <property type="match status" value="2"/>
</dbReference>
<dbReference type="InterPro" id="IPR001870">
    <property type="entry name" value="B30.2/SPRY"/>
</dbReference>
<dbReference type="InterPro" id="IPR043136">
    <property type="entry name" value="B30.2/SPRY_sf"/>
</dbReference>
<dbReference type="InterPro" id="IPR013320">
    <property type="entry name" value="ConA-like_dom_sf"/>
</dbReference>
<dbReference type="InterPro" id="IPR003877">
    <property type="entry name" value="SPRY_dom"/>
</dbReference>
<dbReference type="InterPro" id="IPR035783">
    <property type="entry name" value="SPRYD3_SPRY"/>
</dbReference>
<dbReference type="InterPro" id="IPR050618">
    <property type="entry name" value="Ubq-SigPath_Reg"/>
</dbReference>
<dbReference type="PANTHER" id="PTHR12864">
    <property type="entry name" value="RAN BINDING PROTEIN 9-RELATED"/>
    <property type="match status" value="1"/>
</dbReference>
<dbReference type="Pfam" id="PF00622">
    <property type="entry name" value="SPRY"/>
    <property type="match status" value="2"/>
</dbReference>
<dbReference type="SMART" id="SM00449">
    <property type="entry name" value="SPRY"/>
    <property type="match status" value="2"/>
</dbReference>
<dbReference type="SUPFAM" id="SSF49899">
    <property type="entry name" value="Concanavalin A-like lectins/glucanases"/>
    <property type="match status" value="2"/>
</dbReference>
<dbReference type="PROSITE" id="PS50188">
    <property type="entry name" value="B302_SPRY"/>
    <property type="match status" value="1"/>
</dbReference>
<sequence length="442" mass="49738">MRRTRRPRFVLMNKMDDLNLHYRFLNWRRRIREIREVRAFRYQERFKHILVDGDTLSYHGNSGEVGCYVASRPLTKDSNYFEVSIVDSGVRGTIAVGLVPQYYSLDHQPGWLPDSVAYHADDGKLYNGRAKGRQFGSKCNSGDRIGCGIEPVSFDVQTAQIFFTKNGKRVGSTIMPMSPDGLFPAVGMHSLGEEVRLHLNAELGREDDSVMMVDSYEDEWGRLHDVRVCGTLLEYLGKGKSIVDVGLAQARHPLSTRSHYFEVEIVDPGEKCYIALGLARKDYPKNRHPGWSRGSVAYHADDGKIFHGSGVGDPFEPRCYKGDIMGCGIMFPRDYILDSEGDSDDSCDTVILSPTARAARNVRNVMYLHQEGEEEEEEEEEEEDGEEIEPEHEGRKVVVFFTRNGKIIGKKDAVVPSGGFFPTIGMLSCGEKVKVDLHPLSG</sequence>
<accession>Q5RBR6</accession>
<proteinExistence type="evidence at transcript level"/>
<protein>
    <recommendedName>
        <fullName>SPRY domain-containing protein 3</fullName>
    </recommendedName>
</protein>
<feature type="chain" id="PRO_0000240855" description="SPRY domain-containing protein 3">
    <location>
        <begin position="1"/>
        <end position="442"/>
    </location>
</feature>
<feature type="domain" description="B30.2/SPRY" evidence="1">
    <location>
        <begin position="17"/>
        <end position="204"/>
    </location>
</feature>
<feature type="region of interest" description="Disordered" evidence="2">
    <location>
        <begin position="371"/>
        <end position="394"/>
    </location>
</feature>
<feature type="compositionally biased region" description="Acidic residues" evidence="2">
    <location>
        <begin position="372"/>
        <end position="390"/>
    </location>
</feature>
<keyword id="KW-1185">Reference proteome</keyword>